<proteinExistence type="evidence at transcript level"/>
<accession>Q8MJC6</accession>
<accession>Q8MJC7</accession>
<accession>Q8WNM4</accession>
<feature type="chain" id="PRO_0000127806" description="Cytidine monophosphate-N-acetylneuraminic acid hydroxylase">
    <location>
        <begin position="1" status="less than"/>
        <end position="585"/>
    </location>
</feature>
<feature type="domain" description="Rieske" evidence="3">
    <location>
        <begin position="9"/>
        <end position="107"/>
    </location>
</feature>
<feature type="binding site" evidence="3">
    <location>
        <position position="49"/>
    </location>
    <ligand>
        <name>[2Fe-2S] cluster</name>
        <dbReference type="ChEBI" id="CHEBI:190135"/>
    </ligand>
</feature>
<feature type="binding site" evidence="3">
    <location>
        <position position="51"/>
    </location>
    <ligand>
        <name>[2Fe-2S] cluster</name>
        <dbReference type="ChEBI" id="CHEBI:190135"/>
    </ligand>
</feature>
<feature type="binding site" evidence="3">
    <location>
        <position position="70"/>
    </location>
    <ligand>
        <name>[2Fe-2S] cluster</name>
        <dbReference type="ChEBI" id="CHEBI:190135"/>
    </ligand>
</feature>
<feature type="binding site" evidence="3">
    <location>
        <position position="73"/>
    </location>
    <ligand>
        <name>[2Fe-2S] cluster</name>
        <dbReference type="ChEBI" id="CHEBI:190135"/>
    </ligand>
</feature>
<feature type="sequence conflict" description="In Ref. 2; AAL56238." evidence="4" ref="2">
    <original>K</original>
    <variation>N</variation>
    <location>
        <position position="39"/>
    </location>
</feature>
<feature type="sequence conflict" description="In Ref. 2." evidence="4" ref="2">
    <original>REHPY</original>
    <variation>ARTSL</variation>
    <location>
        <begin position="503"/>
        <end position="507"/>
    </location>
</feature>
<feature type="sequence conflict" description="In Ref. 1; AAN05319." evidence="4" ref="1">
    <original>M</original>
    <variation>T</variation>
    <location>
        <position position="560"/>
    </location>
</feature>
<feature type="sequence conflict" description="In Ref. 1; AAN05319." evidence="4" ref="1">
    <original>T</original>
    <variation>K</variation>
    <location>
        <position position="583"/>
    </location>
</feature>
<feature type="non-terminal residue">
    <location>
        <position position="1"/>
    </location>
</feature>
<reference key="1">
    <citation type="journal article" date="2002" name="Proc. Natl. Acad. Sci. U.S.A.">
        <title>Inactivation of CMP-N-acetylneuraminic acid hydroxylase occurred prior to brain expansion during human evolution.</title>
        <authorList>
            <person name="Chou H.-H."/>
            <person name="Hayakawa T."/>
            <person name="Diaz S."/>
            <person name="Krings M."/>
            <person name="Indriati E."/>
            <person name="Leakey M."/>
            <person name="Paabo S."/>
            <person name="Satta Y."/>
            <person name="Takahata N."/>
            <person name="Varki A."/>
        </authorList>
    </citation>
    <scope>NUCLEOTIDE SEQUENCE [MRNA]</scope>
</reference>
<reference key="2">
    <citation type="journal article" date="2001" name="J. Hered.">
        <title>Human and ape molecular clocks and constraints on paleontological hypotheses.</title>
        <authorList>
            <person name="Stauffer R.L."/>
            <person name="Walker A."/>
            <person name="Ryder O.A."/>
            <person name="Lyons-Weiler M."/>
            <person name="Hedges S.B."/>
        </authorList>
    </citation>
    <scope>NUCLEOTIDE SEQUENCE [MRNA] OF 11-507</scope>
</reference>
<gene>
    <name type="primary">CMAH</name>
</gene>
<protein>
    <recommendedName>
        <fullName>Cytidine monophosphate-N-acetylneuraminic acid hydroxylase</fullName>
        <shortName>CMP-N-acetylneuraminic acid hydroxylase</shortName>
        <ecNumber>1.14.18.2</ecNumber>
    </recommendedName>
    <alternativeName>
        <fullName>CMP-N-acetylneuraminate monooxygenase</fullName>
    </alternativeName>
    <alternativeName>
        <fullName>CMP-Neu5Ac hydroxylase</fullName>
    </alternativeName>
    <alternativeName>
        <fullName>CMP-NeuAc hydroxylase</fullName>
    </alternativeName>
</protein>
<sequence>QTTEILLCLSPVEVANLKEGINFFRNKSTGKDYILYKNKSRLRACKNMCKHQGGLFIKDIEDLAGRSVRCTKHNWKLDVSTMKYINPPESFCQDELVVEMDENNRLLLLELNPPNPWDLQPRSPEELAFGEVQITYLTHACMDLKLGDKRMVFDPWLIGPAFARGWWLLHEPPSDWLERLCQADLIYISHLHSDHLSYPTLKKLAGRRPDIPIYVGNTERPVFWNLNQSGVQLTNINIVPFGIWQQVDKNLRFMILMDGVHPEMDTCIIVEYKGHKILNTVDCTRPNGGRLPMKVALMMSDFAGGASGFPMTFSGGKFTEEWKAQFIKTERKKLLNYKAQLVKNLQPRIYCPFAGYFVESHPSDKYIKETNTKNDPNELNNLIKKNSDVITWTPRPGATLDLARMLKDPTDSKGIVEPPEGTKIYKDSWDFEPYLEILNAAVGDEIFLHSSWIKEYFTWAGFKDYNLVVRMIETDEDFNPFPGGYDYLVDFLDLSFPKERPQREHPYEEIHSRVDVIRHVVKNGLLWDELYIGFQTRLQRDPDIYHHLFWNHFQIKLPLMPPNWKSFLMCCEQNEPGILQECTTT</sequence>
<dbReference type="EC" id="1.14.18.2"/>
<dbReference type="EMBL" id="AF494224">
    <property type="protein sequence ID" value="AAN05319.1"/>
    <property type="molecule type" value="mRNA"/>
</dbReference>
<dbReference type="EMBL" id="AF494225">
    <property type="protein sequence ID" value="AAN05320.1"/>
    <property type="molecule type" value="mRNA"/>
</dbReference>
<dbReference type="EMBL" id="AF354634">
    <property type="protein sequence ID" value="AAL56238.1"/>
    <property type="molecule type" value="mRNA"/>
</dbReference>
<dbReference type="UniPathway" id="UPA00628"/>
<dbReference type="GO" id="GO:0005737">
    <property type="term" value="C:cytoplasm"/>
    <property type="evidence" value="ECO:0007669"/>
    <property type="project" value="UniProtKB-SubCell"/>
</dbReference>
<dbReference type="GO" id="GO:0051537">
    <property type="term" value="F:2 iron, 2 sulfur cluster binding"/>
    <property type="evidence" value="ECO:0007669"/>
    <property type="project" value="UniProtKB-KW"/>
</dbReference>
<dbReference type="GO" id="GO:0030338">
    <property type="term" value="F:CMP-N-acetylneuraminate monooxygenase activity"/>
    <property type="evidence" value="ECO:0007669"/>
    <property type="project" value="UniProtKB-EC"/>
</dbReference>
<dbReference type="GO" id="GO:0046872">
    <property type="term" value="F:metal ion binding"/>
    <property type="evidence" value="ECO:0007669"/>
    <property type="project" value="UniProtKB-KW"/>
</dbReference>
<dbReference type="GO" id="GO:0046381">
    <property type="term" value="P:CMP-N-acetylneuraminate metabolic process"/>
    <property type="evidence" value="ECO:0007669"/>
    <property type="project" value="TreeGrafter"/>
</dbReference>
<dbReference type="GO" id="GO:0006054">
    <property type="term" value="P:N-acetylneuraminate metabolic process"/>
    <property type="evidence" value="ECO:0007669"/>
    <property type="project" value="UniProtKB-UniPathway"/>
</dbReference>
<dbReference type="CDD" id="cd03473">
    <property type="entry name" value="Rieske_CMP_Neu5Ac_hydrolase_N"/>
    <property type="match status" value="1"/>
</dbReference>
<dbReference type="FunFam" id="3.60.15.10:FF:000025">
    <property type="entry name" value="Inactive cytidine monophosphate-N-acetylneuraminic acid hydroxylase"/>
    <property type="match status" value="1"/>
</dbReference>
<dbReference type="Gene3D" id="3.60.15.10">
    <property type="entry name" value="Ribonuclease Z/Hydroxyacylglutathione hydrolase-like"/>
    <property type="match status" value="1"/>
</dbReference>
<dbReference type="Gene3D" id="2.102.10.10">
    <property type="entry name" value="Rieske [2Fe-2S] iron-sulphur domain"/>
    <property type="match status" value="1"/>
</dbReference>
<dbReference type="InterPro" id="IPR037339">
    <property type="entry name" value="CMP-Neu5Ac_hydroxylase_Rieske"/>
</dbReference>
<dbReference type="InterPro" id="IPR027033">
    <property type="entry name" value="Cnh"/>
</dbReference>
<dbReference type="InterPro" id="IPR036866">
    <property type="entry name" value="RibonucZ/Hydroxyglut_hydro"/>
</dbReference>
<dbReference type="InterPro" id="IPR017941">
    <property type="entry name" value="Rieske_2Fe-2S"/>
</dbReference>
<dbReference type="InterPro" id="IPR036922">
    <property type="entry name" value="Rieske_2Fe-2S_sf"/>
</dbReference>
<dbReference type="PANTHER" id="PTHR46522">
    <property type="entry name" value="CYTIDINE MONOPHOSPHATE-N-ACETYLNEURAMINIC ACID HYDROXYLASE"/>
    <property type="match status" value="1"/>
</dbReference>
<dbReference type="PANTHER" id="PTHR46522:SF1">
    <property type="entry name" value="INACTIVE CYTIDINE MONOPHOSPHATE-N-ACETYLNEURAMINIC ACID HYDROXYLASE"/>
    <property type="match status" value="1"/>
</dbReference>
<dbReference type="Pfam" id="PF13483">
    <property type="entry name" value="Lactamase_B_3"/>
    <property type="match status" value="1"/>
</dbReference>
<dbReference type="Pfam" id="PF00355">
    <property type="entry name" value="Rieske"/>
    <property type="match status" value="1"/>
</dbReference>
<dbReference type="SUPFAM" id="SSF50022">
    <property type="entry name" value="ISP domain"/>
    <property type="match status" value="1"/>
</dbReference>
<dbReference type="SUPFAM" id="SSF56281">
    <property type="entry name" value="Metallo-hydrolase/oxidoreductase"/>
    <property type="match status" value="1"/>
</dbReference>
<dbReference type="PROSITE" id="PS51296">
    <property type="entry name" value="RIESKE"/>
    <property type="match status" value="1"/>
</dbReference>
<name>CMAH_PONPY</name>
<evidence type="ECO:0000250" key="1"/>
<evidence type="ECO:0000250" key="2">
    <source>
        <dbReference type="UniProtKB" id="Q61419"/>
    </source>
</evidence>
<evidence type="ECO:0000255" key="3">
    <source>
        <dbReference type="PROSITE-ProRule" id="PRU00628"/>
    </source>
</evidence>
<evidence type="ECO:0000305" key="4"/>
<organism>
    <name type="scientific">Pongo pygmaeus</name>
    <name type="common">Bornean orangutan</name>
    <dbReference type="NCBI Taxonomy" id="9600"/>
    <lineage>
        <taxon>Eukaryota</taxon>
        <taxon>Metazoa</taxon>
        <taxon>Chordata</taxon>
        <taxon>Craniata</taxon>
        <taxon>Vertebrata</taxon>
        <taxon>Euteleostomi</taxon>
        <taxon>Mammalia</taxon>
        <taxon>Eutheria</taxon>
        <taxon>Euarchontoglires</taxon>
        <taxon>Primates</taxon>
        <taxon>Haplorrhini</taxon>
        <taxon>Catarrhini</taxon>
        <taxon>Hominidae</taxon>
        <taxon>Pongo</taxon>
    </lineage>
</organism>
<keyword id="KW-0001">2Fe-2S</keyword>
<keyword id="KW-0963">Cytoplasm</keyword>
<keyword id="KW-0249">Electron transport</keyword>
<keyword id="KW-0408">Iron</keyword>
<keyword id="KW-0411">Iron-sulfur</keyword>
<keyword id="KW-0479">Metal-binding</keyword>
<keyword id="KW-0560">Oxidoreductase</keyword>
<keyword id="KW-0813">Transport</keyword>
<comment type="function">
    <text evidence="2">Sialic acids are components of carbohydrate chains of glycoconjugates and are involved in cell-cell recognition and cell-pathogen interactions. Catalyzes the conversion of CMP-N-acetylneuraminic acid (CMP-Neu5Ac) into its hydroxylated derivative CMP-N-glycolylneuraminic acid (CMP-Neu5Gc), a sialic acid abundantly expressed at the surface of many cells.</text>
</comment>
<comment type="catalytic activity">
    <reaction>
        <text>CMP-N-acetyl-beta-neuraminate + 2 Fe(II)-[cytochrome b5] + O2 + 2 H(+) = CMP-N-glycoloyl-beta-neuraminate + 2 Fe(III)-[cytochrome b5] + H2O</text>
        <dbReference type="Rhea" id="RHEA:16145"/>
        <dbReference type="Rhea" id="RHEA-COMP:10438"/>
        <dbReference type="Rhea" id="RHEA-COMP:10439"/>
        <dbReference type="ChEBI" id="CHEBI:15377"/>
        <dbReference type="ChEBI" id="CHEBI:15378"/>
        <dbReference type="ChEBI" id="CHEBI:15379"/>
        <dbReference type="ChEBI" id="CHEBI:29033"/>
        <dbReference type="ChEBI" id="CHEBI:29034"/>
        <dbReference type="ChEBI" id="CHEBI:57812"/>
        <dbReference type="ChEBI" id="CHEBI:58376"/>
        <dbReference type="EC" id="1.14.18.2"/>
    </reaction>
</comment>
<comment type="cofactor">
    <cofactor evidence="3">
        <name>[2Fe-2S] cluster</name>
        <dbReference type="ChEBI" id="CHEBI:190135"/>
    </cofactor>
    <text evidence="3">Binds 1 [2Fe-2S] cluster per subunit.</text>
</comment>
<comment type="pathway">
    <text>Amino-sugar metabolism; N-acetylneuraminate metabolism.</text>
</comment>
<comment type="subcellular location">
    <subcellularLocation>
        <location evidence="1">Cytoplasm</location>
    </subcellularLocation>
</comment>
<comment type="similarity">
    <text evidence="4">Belongs to the CMP-Neu5Ac hydroxylase family.</text>
</comment>